<comment type="function">
    <text evidence="1">Converts 2C-methyl-D-erythritol 2,4-cyclodiphosphate (ME-2,4cPP) into 1-hydroxy-2-methyl-2-(E)-butenyl 4-diphosphate.</text>
</comment>
<comment type="catalytic activity">
    <reaction evidence="1">
        <text>(2E)-4-hydroxy-3-methylbut-2-enyl diphosphate + oxidized [flavodoxin] + H2O + 2 H(+) = 2-C-methyl-D-erythritol 2,4-cyclic diphosphate + reduced [flavodoxin]</text>
        <dbReference type="Rhea" id="RHEA:43604"/>
        <dbReference type="Rhea" id="RHEA-COMP:10622"/>
        <dbReference type="Rhea" id="RHEA-COMP:10623"/>
        <dbReference type="ChEBI" id="CHEBI:15377"/>
        <dbReference type="ChEBI" id="CHEBI:15378"/>
        <dbReference type="ChEBI" id="CHEBI:57618"/>
        <dbReference type="ChEBI" id="CHEBI:58210"/>
        <dbReference type="ChEBI" id="CHEBI:58483"/>
        <dbReference type="ChEBI" id="CHEBI:128753"/>
        <dbReference type="EC" id="1.17.7.3"/>
    </reaction>
</comment>
<comment type="cofactor">
    <cofactor evidence="1">
        <name>[4Fe-4S] cluster</name>
        <dbReference type="ChEBI" id="CHEBI:49883"/>
    </cofactor>
    <text evidence="1">Binds 1 [4Fe-4S] cluster.</text>
</comment>
<comment type="pathway">
    <text evidence="1">Isoprenoid biosynthesis; isopentenyl diphosphate biosynthesis via DXP pathway; isopentenyl diphosphate from 1-deoxy-D-xylulose 5-phosphate: step 5/6.</text>
</comment>
<comment type="similarity">
    <text evidence="1">Belongs to the IspG family.</text>
</comment>
<feature type="chain" id="PRO_0000190537" description="4-hydroxy-3-methylbut-2-en-1-yl diphosphate synthase (flavodoxin)">
    <location>
        <begin position="1"/>
        <end position="377"/>
    </location>
</feature>
<feature type="binding site" evidence="1">
    <location>
        <position position="270"/>
    </location>
    <ligand>
        <name>[4Fe-4S] cluster</name>
        <dbReference type="ChEBI" id="CHEBI:49883"/>
    </ligand>
</feature>
<feature type="binding site" evidence="1">
    <location>
        <position position="273"/>
    </location>
    <ligand>
        <name>[4Fe-4S] cluster</name>
        <dbReference type="ChEBI" id="CHEBI:49883"/>
    </ligand>
</feature>
<feature type="binding site" evidence="1">
    <location>
        <position position="305"/>
    </location>
    <ligand>
        <name>[4Fe-4S] cluster</name>
        <dbReference type="ChEBI" id="CHEBI:49883"/>
    </ligand>
</feature>
<feature type="binding site" evidence="1">
    <location>
        <position position="312"/>
    </location>
    <ligand>
        <name>[4Fe-4S] cluster</name>
        <dbReference type="ChEBI" id="CHEBI:49883"/>
    </ligand>
</feature>
<proteinExistence type="inferred from homology"/>
<name>ISPG_BACSU</name>
<dbReference type="EC" id="1.17.7.3" evidence="1"/>
<dbReference type="EMBL" id="D84432">
    <property type="protein sequence ID" value="BAA12502.1"/>
    <property type="molecule type" value="Genomic_DNA"/>
</dbReference>
<dbReference type="EMBL" id="AL009126">
    <property type="protein sequence ID" value="CAB14437.1"/>
    <property type="molecule type" value="Genomic_DNA"/>
</dbReference>
<dbReference type="PIR" id="C69955">
    <property type="entry name" value="C69955"/>
</dbReference>
<dbReference type="RefSeq" id="NP_390386.1">
    <property type="nucleotide sequence ID" value="NC_000964.3"/>
</dbReference>
<dbReference type="RefSeq" id="WP_010886567.1">
    <property type="nucleotide sequence ID" value="NZ_OZ025638.1"/>
</dbReference>
<dbReference type="SMR" id="P54482"/>
<dbReference type="FunCoup" id="P54482">
    <property type="interactions" value="281"/>
</dbReference>
<dbReference type="IntAct" id="P54482">
    <property type="interactions" value="1"/>
</dbReference>
<dbReference type="MINT" id="P54482"/>
<dbReference type="STRING" id="224308.BSU25070"/>
<dbReference type="jPOST" id="P54482"/>
<dbReference type="PaxDb" id="224308-BSU25070"/>
<dbReference type="DNASU" id="937984"/>
<dbReference type="EnsemblBacteria" id="CAB14437">
    <property type="protein sequence ID" value="CAB14437"/>
    <property type="gene ID" value="BSU_25070"/>
</dbReference>
<dbReference type="GeneID" id="937984"/>
<dbReference type="KEGG" id="bsu:BSU25070"/>
<dbReference type="PATRIC" id="fig|224308.43.peg.2614"/>
<dbReference type="eggNOG" id="COG0821">
    <property type="taxonomic scope" value="Bacteria"/>
</dbReference>
<dbReference type="InParanoid" id="P54482"/>
<dbReference type="OrthoDB" id="9803214at2"/>
<dbReference type="PhylomeDB" id="P54482"/>
<dbReference type="BioCyc" id="BSUB:BSU25070-MONOMER"/>
<dbReference type="UniPathway" id="UPA00056">
    <property type="reaction ID" value="UER00096"/>
</dbReference>
<dbReference type="Proteomes" id="UP000001570">
    <property type="component" value="Chromosome"/>
</dbReference>
<dbReference type="GO" id="GO:0051539">
    <property type="term" value="F:4 iron, 4 sulfur cluster binding"/>
    <property type="evidence" value="ECO:0007669"/>
    <property type="project" value="UniProtKB-UniRule"/>
</dbReference>
<dbReference type="GO" id="GO:0046429">
    <property type="term" value="F:4-hydroxy-3-methylbut-2-en-1-yl diphosphate synthase activity (ferredoxin)"/>
    <property type="evidence" value="ECO:0000318"/>
    <property type="project" value="GO_Central"/>
</dbReference>
<dbReference type="GO" id="GO:0141197">
    <property type="term" value="F:4-hydroxy-3-methylbut-2-enyl-diphosphate synthase activity (flavodoxin)"/>
    <property type="evidence" value="ECO:0007669"/>
    <property type="project" value="UniProtKB-EC"/>
</dbReference>
<dbReference type="GO" id="GO:0005506">
    <property type="term" value="F:iron ion binding"/>
    <property type="evidence" value="ECO:0007669"/>
    <property type="project" value="InterPro"/>
</dbReference>
<dbReference type="GO" id="GO:0019288">
    <property type="term" value="P:isopentenyl diphosphate biosynthetic process, methylerythritol 4-phosphate pathway"/>
    <property type="evidence" value="ECO:0000318"/>
    <property type="project" value="GO_Central"/>
</dbReference>
<dbReference type="GO" id="GO:0016114">
    <property type="term" value="P:terpenoid biosynthetic process"/>
    <property type="evidence" value="ECO:0007669"/>
    <property type="project" value="InterPro"/>
</dbReference>
<dbReference type="FunFam" id="3.20.20.20:FF:000001">
    <property type="entry name" value="4-hydroxy-3-methylbut-2-en-1-yl diphosphate synthase (flavodoxin)"/>
    <property type="match status" value="1"/>
</dbReference>
<dbReference type="FunFam" id="3.30.413.10:FF:000005">
    <property type="entry name" value="4-hydroxy-3-methylbut-2-en-1-yl diphosphate synthase (flavodoxin)"/>
    <property type="match status" value="1"/>
</dbReference>
<dbReference type="Gene3D" id="3.20.20.20">
    <property type="entry name" value="Dihydropteroate synthase-like"/>
    <property type="match status" value="1"/>
</dbReference>
<dbReference type="Gene3D" id="3.30.413.10">
    <property type="entry name" value="Sulfite Reductase Hemoprotein, domain 1"/>
    <property type="match status" value="1"/>
</dbReference>
<dbReference type="HAMAP" id="MF_00159">
    <property type="entry name" value="IspG"/>
    <property type="match status" value="1"/>
</dbReference>
<dbReference type="InterPro" id="IPR011005">
    <property type="entry name" value="Dihydropteroate_synth-like_sf"/>
</dbReference>
<dbReference type="InterPro" id="IPR016425">
    <property type="entry name" value="IspG_bac"/>
</dbReference>
<dbReference type="InterPro" id="IPR004588">
    <property type="entry name" value="IspG_bac-typ"/>
</dbReference>
<dbReference type="InterPro" id="IPR045854">
    <property type="entry name" value="NO2/SO3_Rdtase_4Fe4S_sf"/>
</dbReference>
<dbReference type="NCBIfam" id="TIGR00612">
    <property type="entry name" value="ispG_gcpE"/>
    <property type="match status" value="1"/>
</dbReference>
<dbReference type="NCBIfam" id="NF001540">
    <property type="entry name" value="PRK00366.1"/>
    <property type="match status" value="1"/>
</dbReference>
<dbReference type="PANTHER" id="PTHR30454">
    <property type="entry name" value="4-HYDROXY-3-METHYLBUT-2-EN-1-YL DIPHOSPHATE SYNTHASE"/>
    <property type="match status" value="1"/>
</dbReference>
<dbReference type="PANTHER" id="PTHR30454:SF0">
    <property type="entry name" value="4-HYDROXY-3-METHYLBUT-2-EN-1-YL DIPHOSPHATE SYNTHASE (FERREDOXIN), CHLOROPLASTIC"/>
    <property type="match status" value="1"/>
</dbReference>
<dbReference type="Pfam" id="PF04551">
    <property type="entry name" value="GcpE"/>
    <property type="match status" value="1"/>
</dbReference>
<dbReference type="PIRSF" id="PIRSF004640">
    <property type="entry name" value="IspG"/>
    <property type="match status" value="1"/>
</dbReference>
<dbReference type="SUPFAM" id="SSF51717">
    <property type="entry name" value="Dihydropteroate synthetase-like"/>
    <property type="match status" value="1"/>
</dbReference>
<dbReference type="SUPFAM" id="SSF56014">
    <property type="entry name" value="Nitrite and sulphite reductase 4Fe-4S domain-like"/>
    <property type="match status" value="1"/>
</dbReference>
<reference key="1">
    <citation type="journal article" date="1996" name="Microbiology">
        <title>Systematic sequencing of the 283 kb 210 degrees-232 degrees region of the Bacillus subtilis genome containing the skin element and many sporulation genes.</title>
        <authorList>
            <person name="Mizuno M."/>
            <person name="Masuda S."/>
            <person name="Takemaru K."/>
            <person name="Hosono S."/>
            <person name="Sato T."/>
            <person name="Takeuchi M."/>
            <person name="Kobayashi Y."/>
        </authorList>
    </citation>
    <scope>NUCLEOTIDE SEQUENCE [GENOMIC DNA]</scope>
    <source>
        <strain>168 / JH642</strain>
    </source>
</reference>
<reference key="2">
    <citation type="journal article" date="1997" name="Nature">
        <title>The complete genome sequence of the Gram-positive bacterium Bacillus subtilis.</title>
        <authorList>
            <person name="Kunst F."/>
            <person name="Ogasawara N."/>
            <person name="Moszer I."/>
            <person name="Albertini A.M."/>
            <person name="Alloni G."/>
            <person name="Azevedo V."/>
            <person name="Bertero M.G."/>
            <person name="Bessieres P."/>
            <person name="Bolotin A."/>
            <person name="Borchert S."/>
            <person name="Borriss R."/>
            <person name="Boursier L."/>
            <person name="Brans A."/>
            <person name="Braun M."/>
            <person name="Brignell S.C."/>
            <person name="Bron S."/>
            <person name="Brouillet S."/>
            <person name="Bruschi C.V."/>
            <person name="Caldwell B."/>
            <person name="Capuano V."/>
            <person name="Carter N.M."/>
            <person name="Choi S.-K."/>
            <person name="Codani J.-J."/>
            <person name="Connerton I.F."/>
            <person name="Cummings N.J."/>
            <person name="Daniel R.A."/>
            <person name="Denizot F."/>
            <person name="Devine K.M."/>
            <person name="Duesterhoeft A."/>
            <person name="Ehrlich S.D."/>
            <person name="Emmerson P.T."/>
            <person name="Entian K.-D."/>
            <person name="Errington J."/>
            <person name="Fabret C."/>
            <person name="Ferrari E."/>
            <person name="Foulger D."/>
            <person name="Fritz C."/>
            <person name="Fujita M."/>
            <person name="Fujita Y."/>
            <person name="Fuma S."/>
            <person name="Galizzi A."/>
            <person name="Galleron N."/>
            <person name="Ghim S.-Y."/>
            <person name="Glaser P."/>
            <person name="Goffeau A."/>
            <person name="Golightly E.J."/>
            <person name="Grandi G."/>
            <person name="Guiseppi G."/>
            <person name="Guy B.J."/>
            <person name="Haga K."/>
            <person name="Haiech J."/>
            <person name="Harwood C.R."/>
            <person name="Henaut A."/>
            <person name="Hilbert H."/>
            <person name="Holsappel S."/>
            <person name="Hosono S."/>
            <person name="Hullo M.-F."/>
            <person name="Itaya M."/>
            <person name="Jones L.-M."/>
            <person name="Joris B."/>
            <person name="Karamata D."/>
            <person name="Kasahara Y."/>
            <person name="Klaerr-Blanchard M."/>
            <person name="Klein C."/>
            <person name="Kobayashi Y."/>
            <person name="Koetter P."/>
            <person name="Koningstein G."/>
            <person name="Krogh S."/>
            <person name="Kumano M."/>
            <person name="Kurita K."/>
            <person name="Lapidus A."/>
            <person name="Lardinois S."/>
            <person name="Lauber J."/>
            <person name="Lazarevic V."/>
            <person name="Lee S.-M."/>
            <person name="Levine A."/>
            <person name="Liu H."/>
            <person name="Masuda S."/>
            <person name="Mauel C."/>
            <person name="Medigue C."/>
            <person name="Medina N."/>
            <person name="Mellado R.P."/>
            <person name="Mizuno M."/>
            <person name="Moestl D."/>
            <person name="Nakai S."/>
            <person name="Noback M."/>
            <person name="Noone D."/>
            <person name="O'Reilly M."/>
            <person name="Ogawa K."/>
            <person name="Ogiwara A."/>
            <person name="Oudega B."/>
            <person name="Park S.-H."/>
            <person name="Parro V."/>
            <person name="Pohl T.M."/>
            <person name="Portetelle D."/>
            <person name="Porwollik S."/>
            <person name="Prescott A.M."/>
            <person name="Presecan E."/>
            <person name="Pujic P."/>
            <person name="Purnelle B."/>
            <person name="Rapoport G."/>
            <person name="Rey M."/>
            <person name="Reynolds S."/>
            <person name="Rieger M."/>
            <person name="Rivolta C."/>
            <person name="Rocha E."/>
            <person name="Roche B."/>
            <person name="Rose M."/>
            <person name="Sadaie Y."/>
            <person name="Sato T."/>
            <person name="Scanlan E."/>
            <person name="Schleich S."/>
            <person name="Schroeter R."/>
            <person name="Scoffone F."/>
            <person name="Sekiguchi J."/>
            <person name="Sekowska A."/>
            <person name="Seror S.J."/>
            <person name="Serror P."/>
            <person name="Shin B.-S."/>
            <person name="Soldo B."/>
            <person name="Sorokin A."/>
            <person name="Tacconi E."/>
            <person name="Takagi T."/>
            <person name="Takahashi H."/>
            <person name="Takemaru K."/>
            <person name="Takeuchi M."/>
            <person name="Tamakoshi A."/>
            <person name="Tanaka T."/>
            <person name="Terpstra P."/>
            <person name="Tognoni A."/>
            <person name="Tosato V."/>
            <person name="Uchiyama S."/>
            <person name="Vandenbol M."/>
            <person name="Vannier F."/>
            <person name="Vassarotti A."/>
            <person name="Viari A."/>
            <person name="Wambutt R."/>
            <person name="Wedler E."/>
            <person name="Wedler H."/>
            <person name="Weitzenegger T."/>
            <person name="Winters P."/>
            <person name="Wipat A."/>
            <person name="Yamamoto H."/>
            <person name="Yamane K."/>
            <person name="Yasumoto K."/>
            <person name="Yata K."/>
            <person name="Yoshida K."/>
            <person name="Yoshikawa H.-F."/>
            <person name="Zumstein E."/>
            <person name="Yoshikawa H."/>
            <person name="Danchin A."/>
        </authorList>
    </citation>
    <scope>NUCLEOTIDE SEQUENCE [LARGE SCALE GENOMIC DNA]</scope>
    <source>
        <strain>168</strain>
    </source>
</reference>
<protein>
    <recommendedName>
        <fullName evidence="1">4-hydroxy-3-methylbut-2-en-1-yl diphosphate synthase (flavodoxin)</fullName>
        <ecNumber evidence="1">1.17.7.3</ecNumber>
    </recommendedName>
    <alternativeName>
        <fullName evidence="1">1-hydroxy-2-methyl-2-(E)-butenyl 4-diphosphate synthase</fullName>
    </alternativeName>
</protein>
<organism>
    <name type="scientific">Bacillus subtilis (strain 168)</name>
    <dbReference type="NCBI Taxonomy" id="224308"/>
    <lineage>
        <taxon>Bacteria</taxon>
        <taxon>Bacillati</taxon>
        <taxon>Bacillota</taxon>
        <taxon>Bacilli</taxon>
        <taxon>Bacillales</taxon>
        <taxon>Bacillaceae</taxon>
        <taxon>Bacillus</taxon>
    </lineage>
</organism>
<keyword id="KW-0004">4Fe-4S</keyword>
<keyword id="KW-0408">Iron</keyword>
<keyword id="KW-0411">Iron-sulfur</keyword>
<keyword id="KW-0414">Isoprene biosynthesis</keyword>
<keyword id="KW-0479">Metal-binding</keyword>
<keyword id="KW-0560">Oxidoreductase</keyword>
<keyword id="KW-1185">Reference proteome</keyword>
<evidence type="ECO:0000255" key="1">
    <source>
        <dbReference type="HAMAP-Rule" id="MF_00159"/>
    </source>
</evidence>
<sequence length="377" mass="40583">MQVSEITHRTKTRPVKVGPLTIGGNNEVVIQSMTTTKTHDVEATVAEINRLAEAGCQIVRVACPDERAANAIADIKKRISIPLVVDIHFDYKLALKAIEGGADKIRINPGNIGRREKVEAVVKAAKDKGIPIRIGVNAGSLEKRILEKYGYPTADGMVESALHHIKILEDLDFHDIIVSMKASDVNLAIEAYEKAAKAFDYPLHLGITESGTLFAGTVKSAAGLGAILSKGIGNTMRISLSADPVEEVKVARELLKSFGLASNAATLISCPTCGRIEIDLISIANEVEEYISKIKAPIKVAVLGCAVNGPGEAREADIGIAGARGEGLLFRKGKIVRKVPEETMVEELKKEIDILAEEHYAKLEAEKAKLKEETQKA</sequence>
<accession>P54482</accession>
<gene>
    <name evidence="1" type="primary">ispG</name>
    <name type="synonym">yqfY</name>
    <name type="ordered locus">BSU25070</name>
</gene>